<sequence length="334" mass="36711">MEKATLNSIQKSVWEGQIPLKIVLAPSESRTYDQTDPYLISYPRISYLPSLLPRLKAFFSSSLIDPTASQPHDGWFSFEGVPLKWHYPVGLLYDLYAGAEPATKSSETEALDDEQLPWRLVVHFGDWPDAELVRLDAQGTVMHDAFINSVKEADFVRNGTAKGIMTLSKDDSSGLWKAVQDVDLPSFQRIMNILLPPNPHQPLRNLPVRLFLPLPPKPDSNSDSPFLKVVQSPIPPTISTTPSQLQRQMAQSTLSSSGVSGSSPGAAQPQPQTQTIGTALHSILPNLFPSRRTPVIAKPVLHGAQVPMSAPVEEVVRAAAYGDGWVYIVIRMMG</sequence>
<proteinExistence type="inferred from homology"/>
<gene>
    <name type="primary">atg5</name>
    <name type="ORF">AN5174</name>
</gene>
<dbReference type="EMBL" id="AACD01000089">
    <property type="protein sequence ID" value="EAA62355.1"/>
    <property type="status" value="ALT_SEQ"/>
    <property type="molecule type" value="Genomic_DNA"/>
</dbReference>
<dbReference type="EMBL" id="BN001305">
    <property type="protein sequence ID" value="CBF81013.1"/>
    <property type="molecule type" value="Genomic_DNA"/>
</dbReference>
<dbReference type="RefSeq" id="XP_662778.1">
    <property type="nucleotide sequence ID" value="XM_657686.1"/>
</dbReference>
<dbReference type="SMR" id="Q5B2Q6"/>
<dbReference type="FunCoup" id="Q5B2Q6">
    <property type="interactions" value="325"/>
</dbReference>
<dbReference type="STRING" id="227321.Q5B2Q6"/>
<dbReference type="EnsemblFungi" id="CBF81013">
    <property type="protein sequence ID" value="CBF81013"/>
    <property type="gene ID" value="ANIA_05174"/>
</dbReference>
<dbReference type="VEuPathDB" id="FungiDB:AN5174"/>
<dbReference type="eggNOG" id="KOG2976">
    <property type="taxonomic scope" value="Eukaryota"/>
</dbReference>
<dbReference type="HOGENOM" id="CLU_566231_0_0_1"/>
<dbReference type="InParanoid" id="Q5B2Q6"/>
<dbReference type="OMA" id="SIQKAVW"/>
<dbReference type="OrthoDB" id="272162at2759"/>
<dbReference type="Proteomes" id="UP000000560">
    <property type="component" value="Chromosome V"/>
</dbReference>
<dbReference type="GO" id="GO:0034274">
    <property type="term" value="C:Atg12-Atg5-Atg16 complex"/>
    <property type="evidence" value="ECO:0000318"/>
    <property type="project" value="GO_Central"/>
</dbReference>
<dbReference type="GO" id="GO:0005776">
    <property type="term" value="C:autophagosome"/>
    <property type="evidence" value="ECO:0000318"/>
    <property type="project" value="GO_Central"/>
</dbReference>
<dbReference type="GO" id="GO:0061908">
    <property type="term" value="C:phagophore"/>
    <property type="evidence" value="ECO:0000318"/>
    <property type="project" value="GO_Central"/>
</dbReference>
<dbReference type="GO" id="GO:0034045">
    <property type="term" value="C:phagophore assembly site membrane"/>
    <property type="evidence" value="ECO:0000318"/>
    <property type="project" value="GO_Central"/>
</dbReference>
<dbReference type="GO" id="GO:0035973">
    <property type="term" value="P:aggrephagy"/>
    <property type="evidence" value="ECO:0000318"/>
    <property type="project" value="GO_Central"/>
</dbReference>
<dbReference type="GO" id="GO:0000045">
    <property type="term" value="P:autophagosome assembly"/>
    <property type="evidence" value="ECO:0000318"/>
    <property type="project" value="GO_Central"/>
</dbReference>
<dbReference type="GO" id="GO:0006995">
    <property type="term" value="P:cellular response to nitrogen starvation"/>
    <property type="evidence" value="ECO:0000318"/>
    <property type="project" value="GO_Central"/>
</dbReference>
<dbReference type="GO" id="GO:0000423">
    <property type="term" value="P:mitophagy"/>
    <property type="evidence" value="ECO:0000318"/>
    <property type="project" value="GO_Central"/>
</dbReference>
<dbReference type="GO" id="GO:0034727">
    <property type="term" value="P:piecemeal microautophagy of the nucleus"/>
    <property type="evidence" value="ECO:0000318"/>
    <property type="project" value="GO_Central"/>
</dbReference>
<dbReference type="GO" id="GO:0015031">
    <property type="term" value="P:protein transport"/>
    <property type="evidence" value="ECO:0007669"/>
    <property type="project" value="UniProtKB-KW"/>
</dbReference>
<dbReference type="FunFam" id="1.10.246.190:FF:000004">
    <property type="entry name" value="Autophagy protein 5"/>
    <property type="match status" value="1"/>
</dbReference>
<dbReference type="FunFam" id="3.10.20.620:FF:000004">
    <property type="entry name" value="Autophagy protein 5"/>
    <property type="match status" value="1"/>
</dbReference>
<dbReference type="FunFam" id="3.10.20.90:FF:000290">
    <property type="entry name" value="Autophagy protein 5"/>
    <property type="match status" value="1"/>
</dbReference>
<dbReference type="Gene3D" id="3.10.20.620">
    <property type="match status" value="1"/>
</dbReference>
<dbReference type="Gene3D" id="1.10.246.190">
    <property type="entry name" value="Autophagy protein Apg5, helix rich domain"/>
    <property type="match status" value="1"/>
</dbReference>
<dbReference type="Gene3D" id="3.10.20.90">
    <property type="entry name" value="Phosphatidylinositol 3-kinase Catalytic Subunit, Chain A, domain 1"/>
    <property type="match status" value="1"/>
</dbReference>
<dbReference type="InterPro" id="IPR007239">
    <property type="entry name" value="Atg5"/>
</dbReference>
<dbReference type="InterPro" id="IPR048940">
    <property type="entry name" value="ATG5_HBR"/>
</dbReference>
<dbReference type="InterPro" id="IPR042526">
    <property type="entry name" value="Atg5_HR"/>
</dbReference>
<dbReference type="InterPro" id="IPR048939">
    <property type="entry name" value="ATG5_UblA"/>
</dbReference>
<dbReference type="InterPro" id="IPR042527">
    <property type="entry name" value="Atg5_UblA_dom_sf"/>
</dbReference>
<dbReference type="InterPro" id="IPR048318">
    <property type="entry name" value="ATG5_UblB"/>
</dbReference>
<dbReference type="PANTHER" id="PTHR13040">
    <property type="entry name" value="AUTOPHAGY PROTEIN 5"/>
    <property type="match status" value="1"/>
</dbReference>
<dbReference type="PANTHER" id="PTHR13040:SF2">
    <property type="entry name" value="AUTOPHAGY PROTEIN 5"/>
    <property type="match status" value="1"/>
</dbReference>
<dbReference type="Pfam" id="PF20637">
    <property type="entry name" value="ATG5_HBR"/>
    <property type="match status" value="1"/>
</dbReference>
<dbReference type="Pfam" id="PF20638">
    <property type="entry name" value="ATG5_UblA"/>
    <property type="match status" value="1"/>
</dbReference>
<dbReference type="Pfam" id="PF04106">
    <property type="entry name" value="ATG5_UblB"/>
    <property type="match status" value="1"/>
</dbReference>
<protein>
    <recommendedName>
        <fullName>Autophagy protein 5</fullName>
    </recommendedName>
</protein>
<reference key="1">
    <citation type="journal article" date="2005" name="Nature">
        <title>Sequencing of Aspergillus nidulans and comparative analysis with A. fumigatus and A. oryzae.</title>
        <authorList>
            <person name="Galagan J.E."/>
            <person name="Calvo S.E."/>
            <person name="Cuomo C."/>
            <person name="Ma L.-J."/>
            <person name="Wortman J.R."/>
            <person name="Batzoglou S."/>
            <person name="Lee S.-I."/>
            <person name="Bastuerkmen M."/>
            <person name="Spevak C.C."/>
            <person name="Clutterbuck J."/>
            <person name="Kapitonov V."/>
            <person name="Jurka J."/>
            <person name="Scazzocchio C."/>
            <person name="Farman M.L."/>
            <person name="Butler J."/>
            <person name="Purcell S."/>
            <person name="Harris S."/>
            <person name="Braus G.H."/>
            <person name="Draht O."/>
            <person name="Busch S."/>
            <person name="D'Enfert C."/>
            <person name="Bouchier C."/>
            <person name="Goldman G.H."/>
            <person name="Bell-Pedersen D."/>
            <person name="Griffiths-Jones S."/>
            <person name="Doonan J.H."/>
            <person name="Yu J."/>
            <person name="Vienken K."/>
            <person name="Pain A."/>
            <person name="Freitag M."/>
            <person name="Selker E.U."/>
            <person name="Archer D.B."/>
            <person name="Penalva M.A."/>
            <person name="Oakley B.R."/>
            <person name="Momany M."/>
            <person name="Tanaka T."/>
            <person name="Kumagai T."/>
            <person name="Asai K."/>
            <person name="Machida M."/>
            <person name="Nierman W.C."/>
            <person name="Denning D.W."/>
            <person name="Caddick M.X."/>
            <person name="Hynes M."/>
            <person name="Paoletti M."/>
            <person name="Fischer R."/>
            <person name="Miller B.L."/>
            <person name="Dyer P.S."/>
            <person name="Sachs M.S."/>
            <person name="Osmani S.A."/>
            <person name="Birren B.W."/>
        </authorList>
    </citation>
    <scope>NUCLEOTIDE SEQUENCE [LARGE SCALE GENOMIC DNA]</scope>
    <source>
        <strain>FGSC A4 / ATCC 38163 / CBS 112.46 / NRRL 194 / M139</strain>
    </source>
</reference>
<reference key="2">
    <citation type="journal article" date="2009" name="Fungal Genet. Biol.">
        <title>The 2008 update of the Aspergillus nidulans genome annotation: a community effort.</title>
        <authorList>
            <person name="Wortman J.R."/>
            <person name="Gilsenan J.M."/>
            <person name="Joardar V."/>
            <person name="Deegan J."/>
            <person name="Clutterbuck J."/>
            <person name="Andersen M.R."/>
            <person name="Archer D."/>
            <person name="Bencina M."/>
            <person name="Braus G."/>
            <person name="Coutinho P."/>
            <person name="von Dohren H."/>
            <person name="Doonan J."/>
            <person name="Driessen A.J."/>
            <person name="Durek P."/>
            <person name="Espeso E."/>
            <person name="Fekete E."/>
            <person name="Flipphi M."/>
            <person name="Estrada C.G."/>
            <person name="Geysens S."/>
            <person name="Goldman G."/>
            <person name="de Groot P.W."/>
            <person name="Hansen K."/>
            <person name="Harris S.D."/>
            <person name="Heinekamp T."/>
            <person name="Helmstaedt K."/>
            <person name="Henrissat B."/>
            <person name="Hofmann G."/>
            <person name="Homan T."/>
            <person name="Horio T."/>
            <person name="Horiuchi H."/>
            <person name="James S."/>
            <person name="Jones M."/>
            <person name="Karaffa L."/>
            <person name="Karanyi Z."/>
            <person name="Kato M."/>
            <person name="Keller N."/>
            <person name="Kelly D.E."/>
            <person name="Kiel J.A."/>
            <person name="Kim J.M."/>
            <person name="van der Klei I.J."/>
            <person name="Klis F.M."/>
            <person name="Kovalchuk A."/>
            <person name="Krasevec N."/>
            <person name="Kubicek C.P."/>
            <person name="Liu B."/>
            <person name="Maccabe A."/>
            <person name="Meyer V."/>
            <person name="Mirabito P."/>
            <person name="Miskei M."/>
            <person name="Mos M."/>
            <person name="Mullins J."/>
            <person name="Nelson D.R."/>
            <person name="Nielsen J."/>
            <person name="Oakley B.R."/>
            <person name="Osmani S.A."/>
            <person name="Pakula T."/>
            <person name="Paszewski A."/>
            <person name="Paulsen I."/>
            <person name="Pilsyk S."/>
            <person name="Pocsi I."/>
            <person name="Punt P.J."/>
            <person name="Ram A.F."/>
            <person name="Ren Q."/>
            <person name="Robellet X."/>
            <person name="Robson G."/>
            <person name="Seiboth B."/>
            <person name="van Solingen P."/>
            <person name="Specht T."/>
            <person name="Sun J."/>
            <person name="Taheri-Talesh N."/>
            <person name="Takeshita N."/>
            <person name="Ussery D."/>
            <person name="vanKuyk P.A."/>
            <person name="Visser H."/>
            <person name="van de Vondervoort P.J."/>
            <person name="de Vries R.P."/>
            <person name="Walton J."/>
            <person name="Xiang X."/>
            <person name="Xiong Y."/>
            <person name="Zeng A.P."/>
            <person name="Brandt B.W."/>
            <person name="Cornell M.J."/>
            <person name="van den Hondel C.A."/>
            <person name="Visser J."/>
            <person name="Oliver S.G."/>
            <person name="Turner G."/>
        </authorList>
    </citation>
    <scope>GENOME REANNOTATION</scope>
    <source>
        <strain>FGSC A4 / ATCC 38163 / CBS 112.46 / NRRL 194 / M139</strain>
    </source>
</reference>
<organism>
    <name type="scientific">Emericella nidulans (strain FGSC A4 / ATCC 38163 / CBS 112.46 / NRRL 194 / M139)</name>
    <name type="common">Aspergillus nidulans</name>
    <dbReference type="NCBI Taxonomy" id="227321"/>
    <lineage>
        <taxon>Eukaryota</taxon>
        <taxon>Fungi</taxon>
        <taxon>Dikarya</taxon>
        <taxon>Ascomycota</taxon>
        <taxon>Pezizomycotina</taxon>
        <taxon>Eurotiomycetes</taxon>
        <taxon>Eurotiomycetidae</taxon>
        <taxon>Eurotiales</taxon>
        <taxon>Aspergillaceae</taxon>
        <taxon>Aspergillus</taxon>
        <taxon>Aspergillus subgen. Nidulantes</taxon>
    </lineage>
</organism>
<comment type="function">
    <text evidence="1">Involved in cytoplasm to vacuole transport (Cvt) and autophagic vesicle formation. Autophagy is essential for maintenance of amino acid levels and protein synthesis under nitrogen starvation. Required for selective autophagic degradation of the nucleus (nucleophagy). Also required for mitophagy, which eliminates defective or superfluous mitochondria in order to fulfill cellular energy requirements and prevent excess ROS production. Conjugation with atg12, through a ubiquitin-like conjugating system involving atg7 as an E1-like activating enzyme and atg10 as an E2-like conjugating enzyme, is essential for its function. The atg12-atg5 conjugate acts as an E3-like enzyme which is required for lipidation of atg8 and atg8 association to the vesicle membranes (By similarity).</text>
</comment>
<comment type="subunit">
    <text evidence="1">Conjugated with atg12.</text>
</comment>
<comment type="subcellular location">
    <subcellularLocation>
        <location evidence="1">Preautophagosomal structure membrane</location>
        <topology evidence="1">Peripheral membrane protein</topology>
    </subcellularLocation>
</comment>
<comment type="PTM">
    <text evidence="1">Conjugated to atg12; which is essential for autophagy.</text>
</comment>
<comment type="similarity">
    <text evidence="3">Belongs to the ATG5 family.</text>
</comment>
<comment type="sequence caution" evidence="3">
    <conflict type="erroneous gene model prediction">
        <sequence resource="EMBL-CDS" id="EAA62355"/>
    </conflict>
</comment>
<name>ATG5_EMENI</name>
<keyword id="KW-0072">Autophagy</keyword>
<keyword id="KW-1017">Isopeptide bond</keyword>
<keyword id="KW-0472">Membrane</keyword>
<keyword id="KW-0653">Protein transport</keyword>
<keyword id="KW-1185">Reference proteome</keyword>
<keyword id="KW-0813">Transport</keyword>
<keyword id="KW-0832">Ubl conjugation</keyword>
<accession>Q5B2Q6</accession>
<accession>C8VF45</accession>
<evidence type="ECO:0000250" key="1"/>
<evidence type="ECO:0000256" key="2">
    <source>
        <dbReference type="SAM" id="MobiDB-lite"/>
    </source>
</evidence>
<evidence type="ECO:0000305" key="3"/>
<feature type="chain" id="PRO_0000219004" description="Autophagy protein 5">
    <location>
        <begin position="1"/>
        <end position="334"/>
    </location>
</feature>
<feature type="region of interest" description="Disordered" evidence="2">
    <location>
        <begin position="237"/>
        <end position="272"/>
    </location>
</feature>
<feature type="compositionally biased region" description="Low complexity" evidence="2">
    <location>
        <begin position="252"/>
        <end position="272"/>
    </location>
</feature>
<feature type="cross-link" description="Glycyl lysine isopeptide (Lys-Gly) (interchain with G-Cter in ATG12)" evidence="1">
    <location>
        <position position="151"/>
    </location>
</feature>